<evidence type="ECO:0000255" key="1">
    <source>
        <dbReference type="HAMAP-Rule" id="MF_01032"/>
    </source>
</evidence>
<name>LEUD_HALOH</name>
<proteinExistence type="inferred from homology"/>
<accession>B8CX23</accession>
<reference key="1">
    <citation type="journal article" date="2009" name="PLoS ONE">
        <title>Genome analysis of the anaerobic thermohalophilic bacterium Halothermothrix orenii.</title>
        <authorList>
            <person name="Mavromatis K."/>
            <person name="Ivanova N."/>
            <person name="Anderson I."/>
            <person name="Lykidis A."/>
            <person name="Hooper S.D."/>
            <person name="Sun H."/>
            <person name="Kunin V."/>
            <person name="Lapidus A."/>
            <person name="Hugenholtz P."/>
            <person name="Patel B."/>
            <person name="Kyrpides N.C."/>
        </authorList>
    </citation>
    <scope>NUCLEOTIDE SEQUENCE [LARGE SCALE GENOMIC DNA]</scope>
    <source>
        <strain>H 168 / OCM 544 / DSM 9562</strain>
    </source>
</reference>
<sequence length="165" mass="18040">MKLKGRVLKYGDNVDTDVIIPARYLNTSNPDELARHCMEDIDPDFASKVKDGDIIVAGKNFGSGSSREHAPLAIKSAGVSCVIAESFARIFYRNAINIGLPILECKDVTDRIEEGDLVEVDLNEGKIKLPEKNINIDSTPFPSFMQEIIKAGGLIEKIKGGIKHA</sequence>
<organism>
    <name type="scientific">Halothermothrix orenii (strain H 168 / OCM 544 / DSM 9562)</name>
    <dbReference type="NCBI Taxonomy" id="373903"/>
    <lineage>
        <taxon>Bacteria</taxon>
        <taxon>Bacillati</taxon>
        <taxon>Bacillota</taxon>
        <taxon>Clostridia</taxon>
        <taxon>Halanaerobiales</taxon>
        <taxon>Halothermotrichaceae</taxon>
        <taxon>Halothermothrix</taxon>
    </lineage>
</organism>
<comment type="function">
    <text evidence="1">Catalyzes the isomerization between 2-isopropylmalate and 3-isopropylmalate, via the formation of 2-isopropylmaleate.</text>
</comment>
<comment type="catalytic activity">
    <reaction evidence="1">
        <text>(2R,3S)-3-isopropylmalate = (2S)-2-isopropylmalate</text>
        <dbReference type="Rhea" id="RHEA:32287"/>
        <dbReference type="ChEBI" id="CHEBI:1178"/>
        <dbReference type="ChEBI" id="CHEBI:35121"/>
        <dbReference type="EC" id="4.2.1.33"/>
    </reaction>
</comment>
<comment type="pathway">
    <text evidence="1">Amino-acid biosynthesis; L-leucine biosynthesis; L-leucine from 3-methyl-2-oxobutanoate: step 2/4.</text>
</comment>
<comment type="subunit">
    <text evidence="1">Heterodimer of LeuC and LeuD.</text>
</comment>
<comment type="similarity">
    <text evidence="1">Belongs to the LeuD family. LeuD type 2 subfamily.</text>
</comment>
<keyword id="KW-0028">Amino-acid biosynthesis</keyword>
<keyword id="KW-0100">Branched-chain amino acid biosynthesis</keyword>
<keyword id="KW-0432">Leucine biosynthesis</keyword>
<keyword id="KW-0456">Lyase</keyword>
<keyword id="KW-1185">Reference proteome</keyword>
<gene>
    <name evidence="1" type="primary">leuD</name>
    <name type="ordered locus">Hore_10880</name>
</gene>
<feature type="chain" id="PRO_1000213366" description="3-isopropylmalate dehydratase small subunit">
    <location>
        <begin position="1"/>
        <end position="165"/>
    </location>
</feature>
<protein>
    <recommendedName>
        <fullName evidence="1">3-isopropylmalate dehydratase small subunit</fullName>
        <ecNumber evidence="1">4.2.1.33</ecNumber>
    </recommendedName>
    <alternativeName>
        <fullName evidence="1">Alpha-IPM isomerase</fullName>
        <shortName evidence="1">IPMI</shortName>
    </alternativeName>
    <alternativeName>
        <fullName evidence="1">Isopropylmalate isomerase</fullName>
    </alternativeName>
</protein>
<dbReference type="EC" id="4.2.1.33" evidence="1"/>
<dbReference type="EMBL" id="CP001098">
    <property type="protein sequence ID" value="ACL69842.1"/>
    <property type="molecule type" value="Genomic_DNA"/>
</dbReference>
<dbReference type="RefSeq" id="WP_012636027.1">
    <property type="nucleotide sequence ID" value="NC_011899.1"/>
</dbReference>
<dbReference type="SMR" id="B8CX23"/>
<dbReference type="STRING" id="373903.Hore_10880"/>
<dbReference type="KEGG" id="hor:Hore_10880"/>
<dbReference type="eggNOG" id="COG0066">
    <property type="taxonomic scope" value="Bacteria"/>
</dbReference>
<dbReference type="HOGENOM" id="CLU_081378_1_1_9"/>
<dbReference type="OrthoDB" id="9777465at2"/>
<dbReference type="UniPathway" id="UPA00048">
    <property type="reaction ID" value="UER00071"/>
</dbReference>
<dbReference type="Proteomes" id="UP000000719">
    <property type="component" value="Chromosome"/>
</dbReference>
<dbReference type="GO" id="GO:0003861">
    <property type="term" value="F:3-isopropylmalate dehydratase activity"/>
    <property type="evidence" value="ECO:0007669"/>
    <property type="project" value="UniProtKB-UniRule"/>
</dbReference>
<dbReference type="GO" id="GO:0009098">
    <property type="term" value="P:L-leucine biosynthetic process"/>
    <property type="evidence" value="ECO:0007669"/>
    <property type="project" value="UniProtKB-UniRule"/>
</dbReference>
<dbReference type="CDD" id="cd01577">
    <property type="entry name" value="IPMI_Swivel"/>
    <property type="match status" value="1"/>
</dbReference>
<dbReference type="FunFam" id="3.20.19.10:FF:000007">
    <property type="entry name" value="Isopropylmalate/citramalate isomerase small subunit"/>
    <property type="match status" value="1"/>
</dbReference>
<dbReference type="Gene3D" id="3.20.19.10">
    <property type="entry name" value="Aconitase, domain 4"/>
    <property type="match status" value="1"/>
</dbReference>
<dbReference type="HAMAP" id="MF_01032">
    <property type="entry name" value="LeuD_type2"/>
    <property type="match status" value="1"/>
</dbReference>
<dbReference type="InterPro" id="IPR015928">
    <property type="entry name" value="Aconitase/3IPM_dehydase_swvl"/>
</dbReference>
<dbReference type="InterPro" id="IPR000573">
    <property type="entry name" value="AconitaseA/IPMdHydase_ssu_swvl"/>
</dbReference>
<dbReference type="InterPro" id="IPR033940">
    <property type="entry name" value="IPMI_Swivel"/>
</dbReference>
<dbReference type="InterPro" id="IPR050075">
    <property type="entry name" value="LeuD"/>
</dbReference>
<dbReference type="InterPro" id="IPR011824">
    <property type="entry name" value="LeuD/DmdB_bac"/>
</dbReference>
<dbReference type="InterPro" id="IPR011827">
    <property type="entry name" value="LeuD_type2/HacB/DmdB"/>
</dbReference>
<dbReference type="NCBIfam" id="TIGR02084">
    <property type="entry name" value="leud"/>
    <property type="match status" value="1"/>
</dbReference>
<dbReference type="NCBIfam" id="TIGR02087">
    <property type="entry name" value="LEUD_arch"/>
    <property type="match status" value="1"/>
</dbReference>
<dbReference type="PANTHER" id="PTHR43345:SF2">
    <property type="entry name" value="3-ISOPROPYLMALATE DEHYDRATASE SMALL SUBUNIT 1"/>
    <property type="match status" value="1"/>
</dbReference>
<dbReference type="PANTHER" id="PTHR43345">
    <property type="entry name" value="3-ISOPROPYLMALATE DEHYDRATASE SMALL SUBUNIT 2-RELATED-RELATED"/>
    <property type="match status" value="1"/>
</dbReference>
<dbReference type="Pfam" id="PF00694">
    <property type="entry name" value="Aconitase_C"/>
    <property type="match status" value="1"/>
</dbReference>
<dbReference type="SUPFAM" id="SSF52016">
    <property type="entry name" value="LeuD/IlvD-like"/>
    <property type="match status" value="1"/>
</dbReference>